<protein>
    <recommendedName>
        <fullName evidence="1">Small ribosomal subunit protein bS20</fullName>
    </recommendedName>
    <alternativeName>
        <fullName evidence="2">30S ribosomal protein S20</fullName>
    </alternativeName>
</protein>
<organism>
    <name type="scientific">Thermotoga neapolitana (strain ATCC 49049 / DSM 4359 / NBRC 107923 / NS-E)</name>
    <dbReference type="NCBI Taxonomy" id="309803"/>
    <lineage>
        <taxon>Bacteria</taxon>
        <taxon>Thermotogati</taxon>
        <taxon>Thermotogota</taxon>
        <taxon>Thermotogae</taxon>
        <taxon>Thermotogales</taxon>
        <taxon>Thermotogaceae</taxon>
        <taxon>Thermotoga</taxon>
    </lineage>
</organism>
<accession>B9K7H3</accession>
<feature type="chain" id="PRO_1000194272" description="Small ribosomal subunit protein bS20">
    <location>
        <begin position="1"/>
        <end position="99"/>
    </location>
</feature>
<evidence type="ECO:0000255" key="1">
    <source>
        <dbReference type="HAMAP-Rule" id="MF_00500"/>
    </source>
</evidence>
<evidence type="ECO:0000305" key="2"/>
<gene>
    <name evidence="1" type="primary">rpsT</name>
    <name type="ordered locus">CTN_0730</name>
</gene>
<dbReference type="EMBL" id="CP000916">
    <property type="protein sequence ID" value="ACM22906.1"/>
    <property type="molecule type" value="Genomic_DNA"/>
</dbReference>
<dbReference type="RefSeq" id="WP_015919225.1">
    <property type="nucleotide sequence ID" value="NC_011978.1"/>
</dbReference>
<dbReference type="SMR" id="B9K7H3"/>
<dbReference type="STRING" id="309803.CTN_0730"/>
<dbReference type="KEGG" id="tna:CTN_0730"/>
<dbReference type="eggNOG" id="COG0268">
    <property type="taxonomic scope" value="Bacteria"/>
</dbReference>
<dbReference type="HOGENOM" id="CLU_160655_4_0_0"/>
<dbReference type="Proteomes" id="UP000000445">
    <property type="component" value="Chromosome"/>
</dbReference>
<dbReference type="GO" id="GO:0005829">
    <property type="term" value="C:cytosol"/>
    <property type="evidence" value="ECO:0007669"/>
    <property type="project" value="TreeGrafter"/>
</dbReference>
<dbReference type="GO" id="GO:0015935">
    <property type="term" value="C:small ribosomal subunit"/>
    <property type="evidence" value="ECO:0007669"/>
    <property type="project" value="TreeGrafter"/>
</dbReference>
<dbReference type="GO" id="GO:0070181">
    <property type="term" value="F:small ribosomal subunit rRNA binding"/>
    <property type="evidence" value="ECO:0007669"/>
    <property type="project" value="TreeGrafter"/>
</dbReference>
<dbReference type="GO" id="GO:0003735">
    <property type="term" value="F:structural constituent of ribosome"/>
    <property type="evidence" value="ECO:0007669"/>
    <property type="project" value="InterPro"/>
</dbReference>
<dbReference type="GO" id="GO:0006412">
    <property type="term" value="P:translation"/>
    <property type="evidence" value="ECO:0007669"/>
    <property type="project" value="UniProtKB-UniRule"/>
</dbReference>
<dbReference type="FunFam" id="1.20.58.110:FF:000001">
    <property type="entry name" value="30S ribosomal protein S20"/>
    <property type="match status" value="1"/>
</dbReference>
<dbReference type="Gene3D" id="1.20.58.110">
    <property type="entry name" value="Ribosomal protein S20"/>
    <property type="match status" value="1"/>
</dbReference>
<dbReference type="HAMAP" id="MF_00500">
    <property type="entry name" value="Ribosomal_bS20"/>
    <property type="match status" value="1"/>
</dbReference>
<dbReference type="InterPro" id="IPR002583">
    <property type="entry name" value="Ribosomal_bS20"/>
</dbReference>
<dbReference type="InterPro" id="IPR036510">
    <property type="entry name" value="Ribosomal_bS20_sf"/>
</dbReference>
<dbReference type="NCBIfam" id="TIGR00029">
    <property type="entry name" value="S20"/>
    <property type="match status" value="1"/>
</dbReference>
<dbReference type="PANTHER" id="PTHR33398">
    <property type="entry name" value="30S RIBOSOMAL PROTEIN S20"/>
    <property type="match status" value="1"/>
</dbReference>
<dbReference type="PANTHER" id="PTHR33398:SF1">
    <property type="entry name" value="SMALL RIBOSOMAL SUBUNIT PROTEIN BS20C"/>
    <property type="match status" value="1"/>
</dbReference>
<dbReference type="Pfam" id="PF01649">
    <property type="entry name" value="Ribosomal_S20p"/>
    <property type="match status" value="1"/>
</dbReference>
<dbReference type="SUPFAM" id="SSF46992">
    <property type="entry name" value="Ribosomal protein S20"/>
    <property type="match status" value="1"/>
</dbReference>
<proteinExistence type="inferred from homology"/>
<name>RS20_THENN</name>
<comment type="function">
    <text evidence="1">Binds directly to 16S ribosomal RNA.</text>
</comment>
<comment type="similarity">
    <text evidence="1">Belongs to the bacterial ribosomal protein bS20 family.</text>
</comment>
<reference key="1">
    <citation type="submission" date="2007-11" db="EMBL/GenBank/DDBJ databases">
        <title>The genome sequence of the hyperthermophilic bacterium Thermotoga neapolitana.</title>
        <authorList>
            <person name="Lim S.K."/>
            <person name="Kim J.S."/>
            <person name="Cha S.H."/>
            <person name="Park B.C."/>
            <person name="Lee D.S."/>
            <person name="Tae H.S."/>
            <person name="Kim S.-J."/>
            <person name="Kim J.J."/>
            <person name="Park K.J."/>
            <person name="Lee S.Y."/>
        </authorList>
    </citation>
    <scope>NUCLEOTIDE SEQUENCE [LARGE SCALE GENOMIC DNA]</scope>
    <source>
        <strain>ATCC 49049 / DSM 4359 / NBRC 107923 / NS-E</strain>
    </source>
</reference>
<keyword id="KW-0687">Ribonucleoprotein</keyword>
<keyword id="KW-0689">Ribosomal protein</keyword>
<keyword id="KW-0694">RNA-binding</keyword>
<keyword id="KW-0699">rRNA-binding</keyword>
<sequence length="99" mass="11493">MPNTKSAKKRVRVSEKRRLRNKAYKTFFKNRIKEVIKAIENGEPKEVVLELARKAQAAIDKAVSKGVIHKNQGARRKERLFKRVNEYLKSLEAAETTQE</sequence>